<protein>
    <recommendedName>
        <fullName evidence="1">Biotin synthase</fullName>
        <ecNumber evidence="1">2.8.1.6</ecNumber>
    </recommendedName>
</protein>
<name>BIOB_METMP</name>
<sequence>MKEIKLNSDSLEIYEKSVSEKLNRNDFIKLWDLDLNDLLDISYNLKKLFNKEKIDLCSIMNAKSGICPENCIFCSQSKHNTSKIDTYGLKSKEEILKNAKSVEKYSNRFSIVVSGKTVTDLEFEKIIESIEEIQNKTKLRVCVSLGLLNKDKLKALKERNVRIHNNLETSENYFKNICTSHDYSEKIKVILEAKKIGLEMCSGGIFGMGETIEDRVDLFLDLKKLGVDSVALNLLNPIYGTKIYEKIKSGDISPINSTDALKSICIARIALPNKVIRLCGGREHVLKDMQKYSLLALDGLMIGNYLTTNGQNIQSDLKMIEEMGFER</sequence>
<dbReference type="EC" id="2.8.1.6" evidence="1"/>
<dbReference type="EMBL" id="BX950229">
    <property type="protein sequence ID" value="CAF30794.1"/>
    <property type="molecule type" value="Genomic_DNA"/>
</dbReference>
<dbReference type="RefSeq" id="WP_011171182.1">
    <property type="nucleotide sequence ID" value="NC_005791.1"/>
</dbReference>
<dbReference type="SMR" id="Q6LXV8"/>
<dbReference type="STRING" id="267377.MMP1238"/>
<dbReference type="EnsemblBacteria" id="CAF30794">
    <property type="protein sequence ID" value="CAF30794"/>
    <property type="gene ID" value="MMP1238"/>
</dbReference>
<dbReference type="GeneID" id="2761876"/>
<dbReference type="KEGG" id="mmp:MMP1238"/>
<dbReference type="PATRIC" id="fig|267377.15.peg.1271"/>
<dbReference type="eggNOG" id="arCOG00658">
    <property type="taxonomic scope" value="Archaea"/>
</dbReference>
<dbReference type="HOGENOM" id="CLU_033172_2_1_2"/>
<dbReference type="OrthoDB" id="9264at2157"/>
<dbReference type="UniPathway" id="UPA00078">
    <property type="reaction ID" value="UER00162"/>
</dbReference>
<dbReference type="Proteomes" id="UP000000590">
    <property type="component" value="Chromosome"/>
</dbReference>
<dbReference type="GO" id="GO:0051537">
    <property type="term" value="F:2 iron, 2 sulfur cluster binding"/>
    <property type="evidence" value="ECO:0007669"/>
    <property type="project" value="UniProtKB-KW"/>
</dbReference>
<dbReference type="GO" id="GO:0051539">
    <property type="term" value="F:4 iron, 4 sulfur cluster binding"/>
    <property type="evidence" value="ECO:0007669"/>
    <property type="project" value="UniProtKB-KW"/>
</dbReference>
<dbReference type="GO" id="GO:0004076">
    <property type="term" value="F:biotin synthase activity"/>
    <property type="evidence" value="ECO:0007669"/>
    <property type="project" value="UniProtKB-UniRule"/>
</dbReference>
<dbReference type="GO" id="GO:0005506">
    <property type="term" value="F:iron ion binding"/>
    <property type="evidence" value="ECO:0007669"/>
    <property type="project" value="UniProtKB-UniRule"/>
</dbReference>
<dbReference type="GO" id="GO:0009102">
    <property type="term" value="P:biotin biosynthetic process"/>
    <property type="evidence" value="ECO:0007669"/>
    <property type="project" value="UniProtKB-UniRule"/>
</dbReference>
<dbReference type="CDD" id="cd01335">
    <property type="entry name" value="Radical_SAM"/>
    <property type="match status" value="1"/>
</dbReference>
<dbReference type="FunFam" id="3.20.20.70:FF:000605">
    <property type="match status" value="1"/>
</dbReference>
<dbReference type="Gene3D" id="3.20.20.70">
    <property type="entry name" value="Aldolase class I"/>
    <property type="match status" value="1"/>
</dbReference>
<dbReference type="HAMAP" id="MF_01694">
    <property type="entry name" value="BioB"/>
    <property type="match status" value="1"/>
</dbReference>
<dbReference type="InterPro" id="IPR013785">
    <property type="entry name" value="Aldolase_TIM"/>
</dbReference>
<dbReference type="InterPro" id="IPR010722">
    <property type="entry name" value="BATS_dom"/>
</dbReference>
<dbReference type="InterPro" id="IPR002684">
    <property type="entry name" value="Biotin_synth/BioAB"/>
</dbReference>
<dbReference type="InterPro" id="IPR024177">
    <property type="entry name" value="Biotin_synthase"/>
</dbReference>
<dbReference type="InterPro" id="IPR006638">
    <property type="entry name" value="Elp3/MiaA/NifB-like_rSAM"/>
</dbReference>
<dbReference type="InterPro" id="IPR007197">
    <property type="entry name" value="rSAM"/>
</dbReference>
<dbReference type="NCBIfam" id="TIGR00433">
    <property type="entry name" value="bioB"/>
    <property type="match status" value="1"/>
</dbReference>
<dbReference type="PANTHER" id="PTHR22976">
    <property type="entry name" value="BIOTIN SYNTHASE"/>
    <property type="match status" value="1"/>
</dbReference>
<dbReference type="PANTHER" id="PTHR22976:SF2">
    <property type="entry name" value="BIOTIN SYNTHASE, MITOCHONDRIAL"/>
    <property type="match status" value="1"/>
</dbReference>
<dbReference type="Pfam" id="PF06968">
    <property type="entry name" value="BATS"/>
    <property type="match status" value="1"/>
</dbReference>
<dbReference type="Pfam" id="PF04055">
    <property type="entry name" value="Radical_SAM"/>
    <property type="match status" value="1"/>
</dbReference>
<dbReference type="PIRSF" id="PIRSF001619">
    <property type="entry name" value="Biotin_synth"/>
    <property type="match status" value="1"/>
</dbReference>
<dbReference type="SFLD" id="SFLDG01278">
    <property type="entry name" value="biotin_synthase_like"/>
    <property type="match status" value="1"/>
</dbReference>
<dbReference type="SFLD" id="SFLDS00029">
    <property type="entry name" value="Radical_SAM"/>
    <property type="match status" value="1"/>
</dbReference>
<dbReference type="SMART" id="SM00876">
    <property type="entry name" value="BATS"/>
    <property type="match status" value="1"/>
</dbReference>
<dbReference type="SMART" id="SM00729">
    <property type="entry name" value="Elp3"/>
    <property type="match status" value="1"/>
</dbReference>
<dbReference type="SUPFAM" id="SSF102114">
    <property type="entry name" value="Radical SAM enzymes"/>
    <property type="match status" value="1"/>
</dbReference>
<dbReference type="PROSITE" id="PS51918">
    <property type="entry name" value="RADICAL_SAM"/>
    <property type="match status" value="1"/>
</dbReference>
<evidence type="ECO:0000255" key="1">
    <source>
        <dbReference type="HAMAP-Rule" id="MF_01694"/>
    </source>
</evidence>
<evidence type="ECO:0000255" key="2">
    <source>
        <dbReference type="PROSITE-ProRule" id="PRU01266"/>
    </source>
</evidence>
<keyword id="KW-0001">2Fe-2S</keyword>
<keyword id="KW-0004">4Fe-4S</keyword>
<keyword id="KW-0093">Biotin biosynthesis</keyword>
<keyword id="KW-0408">Iron</keyword>
<keyword id="KW-0411">Iron-sulfur</keyword>
<keyword id="KW-0479">Metal-binding</keyword>
<keyword id="KW-1185">Reference proteome</keyword>
<keyword id="KW-0949">S-adenosyl-L-methionine</keyword>
<keyword id="KW-0808">Transferase</keyword>
<reference key="1">
    <citation type="journal article" date="2004" name="J. Bacteriol.">
        <title>Complete genome sequence of the genetically tractable hydrogenotrophic methanogen Methanococcus maripaludis.</title>
        <authorList>
            <person name="Hendrickson E.L."/>
            <person name="Kaul R."/>
            <person name="Zhou Y."/>
            <person name="Bovee D."/>
            <person name="Chapman P."/>
            <person name="Chung J."/>
            <person name="Conway de Macario E."/>
            <person name="Dodsworth J.A."/>
            <person name="Gillett W."/>
            <person name="Graham D.E."/>
            <person name="Hackett M."/>
            <person name="Haydock A.K."/>
            <person name="Kang A."/>
            <person name="Land M.L."/>
            <person name="Levy R."/>
            <person name="Lie T.J."/>
            <person name="Major T.A."/>
            <person name="Moore B.C."/>
            <person name="Porat I."/>
            <person name="Palmeiri A."/>
            <person name="Rouse G."/>
            <person name="Saenphimmachak C."/>
            <person name="Soell D."/>
            <person name="Van Dien S."/>
            <person name="Wang T."/>
            <person name="Whitman W.B."/>
            <person name="Xia Q."/>
            <person name="Zhang Y."/>
            <person name="Larimer F.W."/>
            <person name="Olson M.V."/>
            <person name="Leigh J.A."/>
        </authorList>
    </citation>
    <scope>NUCLEOTIDE SEQUENCE [LARGE SCALE GENOMIC DNA]</scope>
    <source>
        <strain>DSM 14266 / JCM 13030 / NBRC 101832 / S2 / LL</strain>
    </source>
</reference>
<accession>Q6LXV8</accession>
<proteinExistence type="inferred from homology"/>
<comment type="function">
    <text evidence="1">Catalyzes the conversion of dethiobiotin (DTB) to biotin by the insertion of a sulfur atom into dethiobiotin via a radical-based mechanism.</text>
</comment>
<comment type="catalytic activity">
    <reaction evidence="1">
        <text>(4R,5S)-dethiobiotin + (sulfur carrier)-SH + 2 reduced [2Fe-2S]-[ferredoxin] + 2 S-adenosyl-L-methionine = (sulfur carrier)-H + biotin + 2 5'-deoxyadenosine + 2 L-methionine + 2 oxidized [2Fe-2S]-[ferredoxin]</text>
        <dbReference type="Rhea" id="RHEA:22060"/>
        <dbReference type="Rhea" id="RHEA-COMP:10000"/>
        <dbReference type="Rhea" id="RHEA-COMP:10001"/>
        <dbReference type="Rhea" id="RHEA-COMP:14737"/>
        <dbReference type="Rhea" id="RHEA-COMP:14739"/>
        <dbReference type="ChEBI" id="CHEBI:17319"/>
        <dbReference type="ChEBI" id="CHEBI:29917"/>
        <dbReference type="ChEBI" id="CHEBI:33737"/>
        <dbReference type="ChEBI" id="CHEBI:33738"/>
        <dbReference type="ChEBI" id="CHEBI:57586"/>
        <dbReference type="ChEBI" id="CHEBI:57844"/>
        <dbReference type="ChEBI" id="CHEBI:59789"/>
        <dbReference type="ChEBI" id="CHEBI:64428"/>
        <dbReference type="ChEBI" id="CHEBI:149473"/>
        <dbReference type="EC" id="2.8.1.6"/>
    </reaction>
</comment>
<comment type="cofactor">
    <cofactor evidence="1">
        <name>[4Fe-4S] cluster</name>
        <dbReference type="ChEBI" id="CHEBI:49883"/>
    </cofactor>
    <text evidence="1">Binds 1 [4Fe-4S] cluster. The cluster is coordinated with 3 cysteines and an exchangeable S-adenosyl-L-methionine.</text>
</comment>
<comment type="cofactor">
    <cofactor evidence="1">
        <name>[2Fe-2S] cluster</name>
        <dbReference type="ChEBI" id="CHEBI:190135"/>
    </cofactor>
    <text evidence="1">Binds 1 [2Fe-2S] cluster. The cluster is coordinated with 3 cysteines and 1 arginine.</text>
</comment>
<comment type="pathway">
    <text evidence="1">Cofactor biosynthesis; biotin biosynthesis; biotin from 7,8-diaminononanoate: step 2/2.</text>
</comment>
<comment type="subunit">
    <text evidence="1">Homodimer.</text>
</comment>
<comment type="similarity">
    <text evidence="1">Belongs to the radical SAM superfamily. Biotin synthase family.</text>
</comment>
<feature type="chain" id="PRO_0000381466" description="Biotin synthase">
    <location>
        <begin position="1"/>
        <end position="327"/>
    </location>
</feature>
<feature type="domain" description="Radical SAM core" evidence="2">
    <location>
        <begin position="49"/>
        <end position="282"/>
    </location>
</feature>
<feature type="binding site" evidence="1">
    <location>
        <position position="67"/>
    </location>
    <ligand>
        <name>[4Fe-4S] cluster</name>
        <dbReference type="ChEBI" id="CHEBI:49883"/>
        <note>4Fe-4S-S-AdoMet</note>
    </ligand>
</feature>
<feature type="binding site" evidence="1">
    <location>
        <position position="71"/>
    </location>
    <ligand>
        <name>[4Fe-4S] cluster</name>
        <dbReference type="ChEBI" id="CHEBI:49883"/>
        <note>4Fe-4S-S-AdoMet</note>
    </ligand>
</feature>
<feature type="binding site" evidence="1">
    <location>
        <position position="74"/>
    </location>
    <ligand>
        <name>[4Fe-4S] cluster</name>
        <dbReference type="ChEBI" id="CHEBI:49883"/>
        <note>4Fe-4S-S-AdoMet</note>
    </ligand>
</feature>
<feature type="binding site" evidence="1">
    <location>
        <position position="110"/>
    </location>
    <ligand>
        <name>[2Fe-2S] cluster</name>
        <dbReference type="ChEBI" id="CHEBI:190135"/>
    </ligand>
</feature>
<feature type="binding site" evidence="1">
    <location>
        <position position="142"/>
    </location>
    <ligand>
        <name>[2Fe-2S] cluster</name>
        <dbReference type="ChEBI" id="CHEBI:190135"/>
    </ligand>
</feature>
<feature type="binding site" evidence="1">
    <location>
        <position position="201"/>
    </location>
    <ligand>
        <name>[2Fe-2S] cluster</name>
        <dbReference type="ChEBI" id="CHEBI:190135"/>
    </ligand>
</feature>
<feature type="binding site" evidence="1">
    <location>
        <position position="277"/>
    </location>
    <ligand>
        <name>[2Fe-2S] cluster</name>
        <dbReference type="ChEBI" id="CHEBI:190135"/>
    </ligand>
</feature>
<organism>
    <name type="scientific">Methanococcus maripaludis (strain DSM 14266 / JCM 13030 / NBRC 101832 / S2 / LL)</name>
    <dbReference type="NCBI Taxonomy" id="267377"/>
    <lineage>
        <taxon>Archaea</taxon>
        <taxon>Methanobacteriati</taxon>
        <taxon>Methanobacteriota</taxon>
        <taxon>Methanomada group</taxon>
        <taxon>Methanococci</taxon>
        <taxon>Methanococcales</taxon>
        <taxon>Methanococcaceae</taxon>
        <taxon>Methanococcus</taxon>
    </lineage>
</organism>
<gene>
    <name evidence="1" type="primary">bioB</name>
    <name type="ordered locus">MMP1238</name>
</gene>